<name>SWC5_CANGA</name>
<protein>
    <recommendedName>
        <fullName>SWR1-complex protein 5</fullName>
    </recommendedName>
</protein>
<comment type="function">
    <text evidence="1">Component of the SWR1 complex which mediates the ATP-dependent exchange of histone H2A for the H2A variant HZT1 leading to transcriptional regulation of selected genes by chromatin remodeling. Involved in chromosome stability (By similarity).</text>
</comment>
<comment type="subunit">
    <text evidence="1">Component of the SWR1 chromatin remodeling complex.</text>
</comment>
<comment type="subcellular location">
    <subcellularLocation>
        <location evidence="1">Nucleus</location>
    </subcellularLocation>
</comment>
<comment type="similarity">
    <text evidence="4">Belongs to the SWC5 family.</text>
</comment>
<organism>
    <name type="scientific">Candida glabrata (strain ATCC 2001 / BCRC 20586 / JCM 3761 / NBRC 0622 / NRRL Y-65 / CBS 138)</name>
    <name type="common">Yeast</name>
    <name type="synonym">Nakaseomyces glabratus</name>
    <dbReference type="NCBI Taxonomy" id="284593"/>
    <lineage>
        <taxon>Eukaryota</taxon>
        <taxon>Fungi</taxon>
        <taxon>Dikarya</taxon>
        <taxon>Ascomycota</taxon>
        <taxon>Saccharomycotina</taxon>
        <taxon>Saccharomycetes</taxon>
        <taxon>Saccharomycetales</taxon>
        <taxon>Saccharomycetaceae</taxon>
        <taxon>Nakaseomyces</taxon>
    </lineage>
</organism>
<gene>
    <name type="primary">SWC5</name>
    <name type="ordered locus">CAGL0K07139g</name>
</gene>
<sequence>MEETDIAKLSEEEYNEEEDEDFDPTKGTAVAGAEVSDGEDDDEDDEDDSRVKDSYSHIVSESGGLVKTRRARQQEEEFKRKNKYEGIVEAAISEKVGSIWEDLKKESLSRLHNKENDSVISESSKLKKDNHVAGEEMVTIERVYKFAGETIREKKTVPISSAEAVEYLNNLKFRKSTDQAGSTKRKLEEIDVKENNNTNEDTSESGIDRKKLRRPLKRPPFLEQIISGALKPKLSTLEKSKLDWATYVDKEGINDELSAHNKDGYLAKQDFLNKVDSVKENEYKELRRKEMMIRLQETK</sequence>
<proteinExistence type="inferred from homology"/>
<evidence type="ECO:0000250" key="1"/>
<evidence type="ECO:0000255" key="2">
    <source>
        <dbReference type="PROSITE-ProRule" id="PRU00610"/>
    </source>
</evidence>
<evidence type="ECO:0000256" key="3">
    <source>
        <dbReference type="SAM" id="MobiDB-lite"/>
    </source>
</evidence>
<evidence type="ECO:0000305" key="4"/>
<dbReference type="EMBL" id="CR380957">
    <property type="protein sequence ID" value="CAG61495.1"/>
    <property type="molecule type" value="Genomic_DNA"/>
</dbReference>
<dbReference type="RefSeq" id="XP_448534.1">
    <property type="nucleotide sequence ID" value="XM_448534.1"/>
</dbReference>
<dbReference type="SMR" id="Q6FML0"/>
<dbReference type="FunCoup" id="Q6FML0">
    <property type="interactions" value="521"/>
</dbReference>
<dbReference type="STRING" id="284593.Q6FML0"/>
<dbReference type="EnsemblFungi" id="CAGL0K07139g-T">
    <property type="protein sequence ID" value="CAGL0K07139g-T-p1"/>
    <property type="gene ID" value="CAGL0K07139g"/>
</dbReference>
<dbReference type="KEGG" id="cgr:2890393"/>
<dbReference type="CGD" id="CAL0134731">
    <property type="gene designation" value="CAGL0K07139g"/>
</dbReference>
<dbReference type="VEuPathDB" id="FungiDB:CAGL0K07139g"/>
<dbReference type="eggNOG" id="KOG4776">
    <property type="taxonomic scope" value="Eukaryota"/>
</dbReference>
<dbReference type="HOGENOM" id="CLU_062474_1_0_1"/>
<dbReference type="InParanoid" id="Q6FML0"/>
<dbReference type="OMA" id="LDWAAYV"/>
<dbReference type="Proteomes" id="UP000002428">
    <property type="component" value="Chromosome K"/>
</dbReference>
<dbReference type="GO" id="GO:0005829">
    <property type="term" value="C:cytosol"/>
    <property type="evidence" value="ECO:0007669"/>
    <property type="project" value="EnsemblFungi"/>
</dbReference>
<dbReference type="GO" id="GO:0000812">
    <property type="term" value="C:Swr1 complex"/>
    <property type="evidence" value="ECO:0007669"/>
    <property type="project" value="EnsemblFungi"/>
</dbReference>
<dbReference type="GO" id="GO:0006338">
    <property type="term" value="P:chromatin remodeling"/>
    <property type="evidence" value="ECO:0007669"/>
    <property type="project" value="EnsemblFungi"/>
</dbReference>
<dbReference type="InterPro" id="IPR011421">
    <property type="entry name" value="BCNT-C"/>
</dbReference>
<dbReference type="InterPro" id="IPR027124">
    <property type="entry name" value="Swc5/CFDP1/2"/>
</dbReference>
<dbReference type="PANTHER" id="PTHR48407">
    <property type="entry name" value="CRANIOFACIAL DEVELOPMENT PROTEIN 1"/>
    <property type="match status" value="1"/>
</dbReference>
<dbReference type="PANTHER" id="PTHR48407:SF1">
    <property type="entry name" value="CRANIOFACIAL DEVELOPMENT PROTEIN 1"/>
    <property type="match status" value="1"/>
</dbReference>
<dbReference type="Pfam" id="PF07572">
    <property type="entry name" value="BCNT"/>
    <property type="match status" value="1"/>
</dbReference>
<dbReference type="PROSITE" id="PS51279">
    <property type="entry name" value="BCNT_C"/>
    <property type="match status" value="1"/>
</dbReference>
<accession>Q6FML0</accession>
<feature type="chain" id="PRO_0000212504" description="SWR1-complex protein 5">
    <location>
        <begin position="1"/>
        <end position="299"/>
    </location>
</feature>
<feature type="domain" description="BCNT-C" evidence="2">
    <location>
        <begin position="216"/>
        <end position="293"/>
    </location>
</feature>
<feature type="region of interest" description="Disordered" evidence="3">
    <location>
        <begin position="1"/>
        <end position="71"/>
    </location>
</feature>
<feature type="region of interest" description="Disordered" evidence="3">
    <location>
        <begin position="177"/>
        <end position="213"/>
    </location>
</feature>
<feature type="compositionally biased region" description="Basic and acidic residues" evidence="3">
    <location>
        <begin position="1"/>
        <end position="11"/>
    </location>
</feature>
<feature type="compositionally biased region" description="Acidic residues" evidence="3">
    <location>
        <begin position="12"/>
        <end position="22"/>
    </location>
</feature>
<feature type="compositionally biased region" description="Acidic residues" evidence="3">
    <location>
        <begin position="36"/>
        <end position="48"/>
    </location>
</feature>
<feature type="compositionally biased region" description="Basic and acidic residues" evidence="3">
    <location>
        <begin position="185"/>
        <end position="194"/>
    </location>
</feature>
<reference key="1">
    <citation type="journal article" date="2004" name="Nature">
        <title>Genome evolution in yeasts.</title>
        <authorList>
            <person name="Dujon B."/>
            <person name="Sherman D."/>
            <person name="Fischer G."/>
            <person name="Durrens P."/>
            <person name="Casaregola S."/>
            <person name="Lafontaine I."/>
            <person name="de Montigny J."/>
            <person name="Marck C."/>
            <person name="Neuveglise C."/>
            <person name="Talla E."/>
            <person name="Goffard N."/>
            <person name="Frangeul L."/>
            <person name="Aigle M."/>
            <person name="Anthouard V."/>
            <person name="Babour A."/>
            <person name="Barbe V."/>
            <person name="Barnay S."/>
            <person name="Blanchin S."/>
            <person name="Beckerich J.-M."/>
            <person name="Beyne E."/>
            <person name="Bleykasten C."/>
            <person name="Boisrame A."/>
            <person name="Boyer J."/>
            <person name="Cattolico L."/>
            <person name="Confanioleri F."/>
            <person name="de Daruvar A."/>
            <person name="Despons L."/>
            <person name="Fabre E."/>
            <person name="Fairhead C."/>
            <person name="Ferry-Dumazet H."/>
            <person name="Groppi A."/>
            <person name="Hantraye F."/>
            <person name="Hennequin C."/>
            <person name="Jauniaux N."/>
            <person name="Joyet P."/>
            <person name="Kachouri R."/>
            <person name="Kerrest A."/>
            <person name="Koszul R."/>
            <person name="Lemaire M."/>
            <person name="Lesur I."/>
            <person name="Ma L."/>
            <person name="Muller H."/>
            <person name="Nicaud J.-M."/>
            <person name="Nikolski M."/>
            <person name="Oztas S."/>
            <person name="Ozier-Kalogeropoulos O."/>
            <person name="Pellenz S."/>
            <person name="Potier S."/>
            <person name="Richard G.-F."/>
            <person name="Straub M.-L."/>
            <person name="Suleau A."/>
            <person name="Swennen D."/>
            <person name="Tekaia F."/>
            <person name="Wesolowski-Louvel M."/>
            <person name="Westhof E."/>
            <person name="Wirth B."/>
            <person name="Zeniou-Meyer M."/>
            <person name="Zivanovic Y."/>
            <person name="Bolotin-Fukuhara M."/>
            <person name="Thierry A."/>
            <person name="Bouchier C."/>
            <person name="Caudron B."/>
            <person name="Scarpelli C."/>
            <person name="Gaillardin C."/>
            <person name="Weissenbach J."/>
            <person name="Wincker P."/>
            <person name="Souciet J.-L."/>
        </authorList>
    </citation>
    <scope>NUCLEOTIDE SEQUENCE [LARGE SCALE GENOMIC DNA]</scope>
    <source>
        <strain>ATCC 2001 / BCRC 20586 / JCM 3761 / NBRC 0622 / NRRL Y-65 / CBS 138</strain>
    </source>
</reference>
<keyword id="KW-0010">Activator</keyword>
<keyword id="KW-0156">Chromatin regulator</keyword>
<keyword id="KW-0539">Nucleus</keyword>
<keyword id="KW-1185">Reference proteome</keyword>
<keyword id="KW-0804">Transcription</keyword>
<keyword id="KW-0805">Transcription regulation</keyword>